<accession>O25797</accession>
<proteinExistence type="inferred from homology"/>
<keyword id="KW-0997">Cell inner membrane</keyword>
<keyword id="KW-1003">Cell membrane</keyword>
<keyword id="KW-0472">Membrane</keyword>
<keyword id="KW-1185">Reference proteome</keyword>
<keyword id="KW-0762">Sugar transport</keyword>
<keyword id="KW-0812">Transmembrane</keyword>
<keyword id="KW-1133">Transmembrane helix</keyword>
<keyword id="KW-0813">Transport</keyword>
<name>SOTB_HELPY</name>
<sequence>MMITKQSYQKFALMRVFVFSLSAFIFNTTEFVPVALLSDIAKSFEMESATVGLMITAYAWVVSLGSLPLMLLSAKIERKRLLLFLFALFILSHILSALAWNFWVLLLSRMGIAFAHSIFWSITASLVIRVAPRNKKQQALGLLALGSSLAMILGLPLGRIIGQILDWRSTFGVIGGVATLIALLMWKLLPHLPSRNAGTLASVPVLMKRPLLMGIYLLVIMVISGHFTTYSYIEPFIIQISQFSPDITTLMLFVFGLAGVVGSFLFGRLYAKNSRKFIAFAMVLVICPQLLLFVFKNLEWVVFLQIFLWGIGITSLGISLQMRVLQLAPDATDVASAIYSGSYNVGIGSGALFGSIVIHQLGLGYIGFVGGALGLLALFWLRFITIKFKKT</sequence>
<organism>
    <name type="scientific">Helicobacter pylori (strain ATCC 700392 / 26695)</name>
    <name type="common">Campylobacter pylori</name>
    <dbReference type="NCBI Taxonomy" id="85962"/>
    <lineage>
        <taxon>Bacteria</taxon>
        <taxon>Pseudomonadati</taxon>
        <taxon>Campylobacterota</taxon>
        <taxon>Epsilonproteobacteria</taxon>
        <taxon>Campylobacterales</taxon>
        <taxon>Helicobacteraceae</taxon>
        <taxon>Helicobacter</taxon>
    </lineage>
</organism>
<dbReference type="EMBL" id="AE000511">
    <property type="protein sequence ID" value="AAD08231.1"/>
    <property type="molecule type" value="Genomic_DNA"/>
</dbReference>
<dbReference type="PIR" id="A64668">
    <property type="entry name" value="A64668"/>
</dbReference>
<dbReference type="RefSeq" id="NP_207976.1">
    <property type="nucleotide sequence ID" value="NC_000915.1"/>
</dbReference>
<dbReference type="RefSeq" id="WP_000973595.1">
    <property type="nucleotide sequence ID" value="NC_018939.1"/>
</dbReference>
<dbReference type="SMR" id="O25797"/>
<dbReference type="DIP" id="DIP-3477N"/>
<dbReference type="FunCoup" id="O25797">
    <property type="interactions" value="28"/>
</dbReference>
<dbReference type="IntAct" id="O25797">
    <property type="interactions" value="1"/>
</dbReference>
<dbReference type="MINT" id="O25797"/>
<dbReference type="STRING" id="85962.HP_1185"/>
<dbReference type="PaxDb" id="85962-C694_06130"/>
<dbReference type="EnsemblBacteria" id="AAD08231">
    <property type="protein sequence ID" value="AAD08231"/>
    <property type="gene ID" value="HP_1185"/>
</dbReference>
<dbReference type="KEGG" id="heo:C694_06130"/>
<dbReference type="KEGG" id="hpy:HP_1185"/>
<dbReference type="PATRIC" id="fig|85962.47.peg.1273"/>
<dbReference type="eggNOG" id="COG2814">
    <property type="taxonomic scope" value="Bacteria"/>
</dbReference>
<dbReference type="InParanoid" id="O25797"/>
<dbReference type="OrthoDB" id="9788453at2"/>
<dbReference type="PhylomeDB" id="O25797"/>
<dbReference type="Proteomes" id="UP000000429">
    <property type="component" value="Chromosome"/>
</dbReference>
<dbReference type="GO" id="GO:0005886">
    <property type="term" value="C:plasma membrane"/>
    <property type="evidence" value="ECO:0000318"/>
    <property type="project" value="GO_Central"/>
</dbReference>
<dbReference type="GO" id="GO:0015144">
    <property type="term" value="F:carbohydrate transmembrane transporter activity"/>
    <property type="evidence" value="ECO:0007669"/>
    <property type="project" value="UniProtKB-UniRule"/>
</dbReference>
<dbReference type="GO" id="GO:0022857">
    <property type="term" value="F:transmembrane transporter activity"/>
    <property type="evidence" value="ECO:0000318"/>
    <property type="project" value="GO_Central"/>
</dbReference>
<dbReference type="GO" id="GO:0055085">
    <property type="term" value="P:transmembrane transport"/>
    <property type="evidence" value="ECO:0000318"/>
    <property type="project" value="GO_Central"/>
</dbReference>
<dbReference type="CDD" id="cd17324">
    <property type="entry name" value="MFS_NepI_like"/>
    <property type="match status" value="1"/>
</dbReference>
<dbReference type="Gene3D" id="1.20.1250.20">
    <property type="entry name" value="MFS general substrate transporter like domains"/>
    <property type="match status" value="1"/>
</dbReference>
<dbReference type="HAMAP" id="MF_00517">
    <property type="entry name" value="MFS_SotB"/>
    <property type="match status" value="1"/>
</dbReference>
<dbReference type="InterPro" id="IPR011701">
    <property type="entry name" value="MFS"/>
</dbReference>
<dbReference type="InterPro" id="IPR020846">
    <property type="entry name" value="MFS_dom"/>
</dbReference>
<dbReference type="InterPro" id="IPR050189">
    <property type="entry name" value="MFS_Efflux_Transporters"/>
</dbReference>
<dbReference type="InterPro" id="IPR036259">
    <property type="entry name" value="MFS_trans_sf"/>
</dbReference>
<dbReference type="InterPro" id="IPR023495">
    <property type="entry name" value="Sugar_effux_transptr_put"/>
</dbReference>
<dbReference type="NCBIfam" id="NF002921">
    <property type="entry name" value="PRK03545.1"/>
    <property type="match status" value="1"/>
</dbReference>
<dbReference type="PANTHER" id="PTHR43124">
    <property type="entry name" value="PURINE EFFLUX PUMP PBUE"/>
    <property type="match status" value="1"/>
</dbReference>
<dbReference type="PANTHER" id="PTHR43124:SF4">
    <property type="entry name" value="SUGAR EFFLUX TRANSPORTER"/>
    <property type="match status" value="1"/>
</dbReference>
<dbReference type="Pfam" id="PF07690">
    <property type="entry name" value="MFS_1"/>
    <property type="match status" value="1"/>
</dbReference>
<dbReference type="SUPFAM" id="SSF103473">
    <property type="entry name" value="MFS general substrate transporter"/>
    <property type="match status" value="1"/>
</dbReference>
<dbReference type="PROSITE" id="PS50850">
    <property type="entry name" value="MFS"/>
    <property type="match status" value="1"/>
</dbReference>
<feature type="chain" id="PRO_0000209328" description="Probable sugar efflux transporter">
    <location>
        <begin position="1"/>
        <end position="391"/>
    </location>
</feature>
<feature type="transmembrane region" description="Helical" evidence="1">
    <location>
        <begin position="16"/>
        <end position="36"/>
    </location>
</feature>
<feature type="transmembrane region" description="Helical" evidence="1">
    <location>
        <begin position="51"/>
        <end position="71"/>
    </location>
</feature>
<feature type="transmembrane region" description="Helical" evidence="1">
    <location>
        <begin position="82"/>
        <end position="102"/>
    </location>
</feature>
<feature type="transmembrane region" description="Helical" evidence="1">
    <location>
        <begin position="110"/>
        <end position="130"/>
    </location>
</feature>
<feature type="transmembrane region" description="Helical" evidence="1">
    <location>
        <begin position="138"/>
        <end position="158"/>
    </location>
</feature>
<feature type="transmembrane region" description="Helical" evidence="1">
    <location>
        <begin position="170"/>
        <end position="190"/>
    </location>
</feature>
<feature type="transmembrane region" description="Helical" evidence="1">
    <location>
        <begin position="210"/>
        <end position="230"/>
    </location>
</feature>
<feature type="transmembrane region" description="Helical" evidence="1">
    <location>
        <begin position="247"/>
        <end position="267"/>
    </location>
</feature>
<feature type="transmembrane region" description="Helical" evidence="1">
    <location>
        <begin position="277"/>
        <end position="297"/>
    </location>
</feature>
<feature type="transmembrane region" description="Helical" evidence="1">
    <location>
        <begin position="300"/>
        <end position="320"/>
    </location>
</feature>
<feature type="transmembrane region" description="Helical" evidence="1">
    <location>
        <begin position="338"/>
        <end position="358"/>
    </location>
</feature>
<feature type="transmembrane region" description="Helical" evidence="1">
    <location>
        <begin position="361"/>
        <end position="381"/>
    </location>
</feature>
<gene>
    <name evidence="1" type="primary">sotB</name>
    <name type="ordered locus">HP_1185</name>
</gene>
<comment type="function">
    <text evidence="1">Involved in the efflux of sugars. The physiological role may be the reduction of the intracellular concentration of toxic sugars or sugar metabolites.</text>
</comment>
<comment type="subcellular location">
    <subcellularLocation>
        <location evidence="1">Cell inner membrane</location>
        <topology evidence="1">Multi-pass membrane protein</topology>
    </subcellularLocation>
</comment>
<comment type="similarity">
    <text evidence="1">Belongs to the major facilitator superfamily. SotB (TC 2.A.1.2) family.</text>
</comment>
<protein>
    <recommendedName>
        <fullName evidence="1">Probable sugar efflux transporter</fullName>
    </recommendedName>
</protein>
<evidence type="ECO:0000255" key="1">
    <source>
        <dbReference type="HAMAP-Rule" id="MF_00517"/>
    </source>
</evidence>
<reference key="1">
    <citation type="journal article" date="1997" name="Nature">
        <title>The complete genome sequence of the gastric pathogen Helicobacter pylori.</title>
        <authorList>
            <person name="Tomb J.-F."/>
            <person name="White O."/>
            <person name="Kerlavage A.R."/>
            <person name="Clayton R.A."/>
            <person name="Sutton G.G."/>
            <person name="Fleischmann R.D."/>
            <person name="Ketchum K.A."/>
            <person name="Klenk H.-P."/>
            <person name="Gill S.R."/>
            <person name="Dougherty B.A."/>
            <person name="Nelson K.E."/>
            <person name="Quackenbush J."/>
            <person name="Zhou L."/>
            <person name="Kirkness E.F."/>
            <person name="Peterson S.N."/>
            <person name="Loftus B.J."/>
            <person name="Richardson D.L."/>
            <person name="Dodson R.J."/>
            <person name="Khalak H.G."/>
            <person name="Glodek A."/>
            <person name="McKenney K."/>
            <person name="FitzGerald L.M."/>
            <person name="Lee N."/>
            <person name="Adams M.D."/>
            <person name="Hickey E.K."/>
            <person name="Berg D.E."/>
            <person name="Gocayne J.D."/>
            <person name="Utterback T.R."/>
            <person name="Peterson J.D."/>
            <person name="Kelley J.M."/>
            <person name="Cotton M.D."/>
            <person name="Weidman J.F."/>
            <person name="Fujii C."/>
            <person name="Bowman C."/>
            <person name="Watthey L."/>
            <person name="Wallin E."/>
            <person name="Hayes W.S."/>
            <person name="Borodovsky M."/>
            <person name="Karp P.D."/>
            <person name="Smith H.O."/>
            <person name="Fraser C.M."/>
            <person name="Venter J.C."/>
        </authorList>
    </citation>
    <scope>NUCLEOTIDE SEQUENCE [LARGE SCALE GENOMIC DNA]</scope>
    <source>
        <strain>ATCC 700392 / 26695</strain>
    </source>
</reference>